<sequence>MISVNDFRTGLTIAVDNGLWQVLDFQHVKPGKGAAFVRSKLRNLRTGSVQEKTFRAGEKVEKAHIENRRMQYLYASGEAHVFMDNGTYEQIELGEKQIERELKFLKENMEVSIMTYQGEVLGVELPNTVELQVTETEPGIKGDTASNVTKPATLETGLVVQVPIFINEGEMLIINTGEGKYVSRA</sequence>
<evidence type="ECO:0000255" key="1">
    <source>
        <dbReference type="HAMAP-Rule" id="MF_00141"/>
    </source>
</evidence>
<reference key="1">
    <citation type="submission" date="2008-10" db="EMBL/GenBank/DDBJ databases">
        <title>Genome sequence of Bacillus cereus AH820.</title>
        <authorList>
            <person name="Dodson R.J."/>
            <person name="Durkin A.S."/>
            <person name="Rosovitz M.J."/>
            <person name="Rasko D.A."/>
            <person name="Hoffmaster A."/>
            <person name="Ravel J."/>
            <person name="Sutton G."/>
        </authorList>
    </citation>
    <scope>NUCLEOTIDE SEQUENCE [LARGE SCALE GENOMIC DNA]</scope>
    <source>
        <strain>AH820</strain>
    </source>
</reference>
<comment type="function">
    <text evidence="1">Involved in peptide bond synthesis. Stimulates efficient translation and peptide-bond synthesis on native or reconstituted 70S ribosomes in vitro. Probably functions indirectly by altering the affinity of the ribosome for aminoacyl-tRNA, thus increasing their reactivity as acceptors for peptidyl transferase.</text>
</comment>
<comment type="pathway">
    <text evidence="1">Protein biosynthesis; polypeptide chain elongation.</text>
</comment>
<comment type="subcellular location">
    <subcellularLocation>
        <location evidence="1">Cytoplasm</location>
    </subcellularLocation>
</comment>
<comment type="similarity">
    <text evidence="1">Belongs to the elongation factor P family.</text>
</comment>
<accession>B7JM48</accession>
<dbReference type="EMBL" id="CP001283">
    <property type="protein sequence ID" value="ACK88329.1"/>
    <property type="molecule type" value="Genomic_DNA"/>
</dbReference>
<dbReference type="RefSeq" id="WP_000626507.1">
    <property type="nucleotide sequence ID" value="NC_011773.1"/>
</dbReference>
<dbReference type="SMR" id="B7JM48"/>
<dbReference type="GeneID" id="45024081"/>
<dbReference type="KEGG" id="bcu:BCAH820_4217"/>
<dbReference type="HOGENOM" id="CLU_074944_0_1_9"/>
<dbReference type="UniPathway" id="UPA00345"/>
<dbReference type="Proteomes" id="UP000001363">
    <property type="component" value="Chromosome"/>
</dbReference>
<dbReference type="GO" id="GO:0005737">
    <property type="term" value="C:cytoplasm"/>
    <property type="evidence" value="ECO:0007669"/>
    <property type="project" value="UniProtKB-SubCell"/>
</dbReference>
<dbReference type="GO" id="GO:0003746">
    <property type="term" value="F:translation elongation factor activity"/>
    <property type="evidence" value="ECO:0007669"/>
    <property type="project" value="UniProtKB-UniRule"/>
</dbReference>
<dbReference type="GO" id="GO:0043043">
    <property type="term" value="P:peptide biosynthetic process"/>
    <property type="evidence" value="ECO:0007669"/>
    <property type="project" value="InterPro"/>
</dbReference>
<dbReference type="CDD" id="cd04470">
    <property type="entry name" value="S1_EF-P_repeat_1"/>
    <property type="match status" value="1"/>
</dbReference>
<dbReference type="CDD" id="cd05794">
    <property type="entry name" value="S1_EF-P_repeat_2"/>
    <property type="match status" value="1"/>
</dbReference>
<dbReference type="FunFam" id="2.30.30.30:FF:000010">
    <property type="entry name" value="Elongation factor P"/>
    <property type="match status" value="1"/>
</dbReference>
<dbReference type="FunFam" id="2.40.50.140:FF:000004">
    <property type="entry name" value="Elongation factor P"/>
    <property type="match status" value="1"/>
</dbReference>
<dbReference type="FunFam" id="2.40.50.140:FF:000009">
    <property type="entry name" value="Elongation factor P"/>
    <property type="match status" value="1"/>
</dbReference>
<dbReference type="Gene3D" id="2.30.30.30">
    <property type="match status" value="1"/>
</dbReference>
<dbReference type="Gene3D" id="2.40.50.140">
    <property type="entry name" value="Nucleic acid-binding proteins"/>
    <property type="match status" value="2"/>
</dbReference>
<dbReference type="HAMAP" id="MF_00141">
    <property type="entry name" value="EF_P"/>
    <property type="match status" value="1"/>
</dbReference>
<dbReference type="InterPro" id="IPR015365">
    <property type="entry name" value="Elong-fact-P_C"/>
</dbReference>
<dbReference type="InterPro" id="IPR012340">
    <property type="entry name" value="NA-bd_OB-fold"/>
</dbReference>
<dbReference type="InterPro" id="IPR014722">
    <property type="entry name" value="Rib_uL2_dom2"/>
</dbReference>
<dbReference type="InterPro" id="IPR020599">
    <property type="entry name" value="Transl_elong_fac_P/YeiP"/>
</dbReference>
<dbReference type="InterPro" id="IPR013185">
    <property type="entry name" value="Transl_elong_KOW-like"/>
</dbReference>
<dbReference type="InterPro" id="IPR001059">
    <property type="entry name" value="Transl_elong_P/YeiP_cen"/>
</dbReference>
<dbReference type="InterPro" id="IPR013852">
    <property type="entry name" value="Transl_elong_P/YeiP_CS"/>
</dbReference>
<dbReference type="InterPro" id="IPR011768">
    <property type="entry name" value="Transl_elongation_fac_P"/>
</dbReference>
<dbReference type="InterPro" id="IPR008991">
    <property type="entry name" value="Translation_prot_SH3-like_sf"/>
</dbReference>
<dbReference type="NCBIfam" id="TIGR00038">
    <property type="entry name" value="efp"/>
    <property type="match status" value="1"/>
</dbReference>
<dbReference type="NCBIfam" id="NF001810">
    <property type="entry name" value="PRK00529.1"/>
    <property type="match status" value="1"/>
</dbReference>
<dbReference type="PANTHER" id="PTHR30053">
    <property type="entry name" value="ELONGATION FACTOR P"/>
    <property type="match status" value="1"/>
</dbReference>
<dbReference type="PANTHER" id="PTHR30053:SF12">
    <property type="entry name" value="ELONGATION FACTOR P (EF-P) FAMILY PROTEIN"/>
    <property type="match status" value="1"/>
</dbReference>
<dbReference type="Pfam" id="PF01132">
    <property type="entry name" value="EFP"/>
    <property type="match status" value="1"/>
</dbReference>
<dbReference type="Pfam" id="PF08207">
    <property type="entry name" value="EFP_N"/>
    <property type="match status" value="1"/>
</dbReference>
<dbReference type="Pfam" id="PF09285">
    <property type="entry name" value="Elong-fact-P_C"/>
    <property type="match status" value="1"/>
</dbReference>
<dbReference type="PIRSF" id="PIRSF005901">
    <property type="entry name" value="EF-P"/>
    <property type="match status" value="1"/>
</dbReference>
<dbReference type="SMART" id="SM01185">
    <property type="entry name" value="EFP"/>
    <property type="match status" value="1"/>
</dbReference>
<dbReference type="SMART" id="SM00841">
    <property type="entry name" value="Elong-fact-P_C"/>
    <property type="match status" value="1"/>
</dbReference>
<dbReference type="SUPFAM" id="SSF50249">
    <property type="entry name" value="Nucleic acid-binding proteins"/>
    <property type="match status" value="2"/>
</dbReference>
<dbReference type="SUPFAM" id="SSF50104">
    <property type="entry name" value="Translation proteins SH3-like domain"/>
    <property type="match status" value="1"/>
</dbReference>
<dbReference type="PROSITE" id="PS01275">
    <property type="entry name" value="EFP"/>
    <property type="match status" value="1"/>
</dbReference>
<proteinExistence type="inferred from homology"/>
<organism>
    <name type="scientific">Bacillus cereus (strain AH820)</name>
    <dbReference type="NCBI Taxonomy" id="405535"/>
    <lineage>
        <taxon>Bacteria</taxon>
        <taxon>Bacillati</taxon>
        <taxon>Bacillota</taxon>
        <taxon>Bacilli</taxon>
        <taxon>Bacillales</taxon>
        <taxon>Bacillaceae</taxon>
        <taxon>Bacillus</taxon>
        <taxon>Bacillus cereus group</taxon>
    </lineage>
</organism>
<name>EFP_BACC0</name>
<gene>
    <name evidence="1" type="primary">efp</name>
    <name type="ordered locus">BCAH820_4217</name>
</gene>
<keyword id="KW-0963">Cytoplasm</keyword>
<keyword id="KW-0251">Elongation factor</keyword>
<keyword id="KW-0648">Protein biosynthesis</keyword>
<protein>
    <recommendedName>
        <fullName evidence="1">Elongation factor P</fullName>
        <shortName evidence="1">EF-P</shortName>
    </recommendedName>
</protein>
<feature type="chain" id="PRO_1000117884" description="Elongation factor P">
    <location>
        <begin position="1"/>
        <end position="185"/>
    </location>
</feature>